<comment type="function">
    <text evidence="1">Binds as a heterodimer with protein bS6 to the central domain of the 16S rRNA, where it helps stabilize the platform of the 30S subunit.</text>
</comment>
<comment type="subunit">
    <text evidence="1">Part of the 30S ribosomal subunit. Forms a tight heterodimer with protein bS6.</text>
</comment>
<comment type="similarity">
    <text evidence="1">Belongs to the bacterial ribosomal protein bS18 family.</text>
</comment>
<evidence type="ECO:0000255" key="1">
    <source>
        <dbReference type="HAMAP-Rule" id="MF_00270"/>
    </source>
</evidence>
<evidence type="ECO:0000305" key="2"/>
<dbReference type="EMBL" id="CP000123">
    <property type="protein sequence ID" value="ABC01690.1"/>
    <property type="molecule type" value="Genomic_DNA"/>
</dbReference>
<dbReference type="RefSeq" id="WP_011386929.1">
    <property type="nucleotide sequence ID" value="NC_007633.1"/>
</dbReference>
<dbReference type="SMR" id="Q2ST89"/>
<dbReference type="GeneID" id="23779019"/>
<dbReference type="KEGG" id="mcp:MCAP_0026"/>
<dbReference type="HOGENOM" id="CLU_148710_2_2_14"/>
<dbReference type="PhylomeDB" id="Q2ST89"/>
<dbReference type="Proteomes" id="UP000001928">
    <property type="component" value="Chromosome"/>
</dbReference>
<dbReference type="GO" id="GO:0022627">
    <property type="term" value="C:cytosolic small ribosomal subunit"/>
    <property type="evidence" value="ECO:0007669"/>
    <property type="project" value="TreeGrafter"/>
</dbReference>
<dbReference type="GO" id="GO:0070181">
    <property type="term" value="F:small ribosomal subunit rRNA binding"/>
    <property type="evidence" value="ECO:0007669"/>
    <property type="project" value="TreeGrafter"/>
</dbReference>
<dbReference type="GO" id="GO:0003735">
    <property type="term" value="F:structural constituent of ribosome"/>
    <property type="evidence" value="ECO:0007669"/>
    <property type="project" value="InterPro"/>
</dbReference>
<dbReference type="GO" id="GO:0006412">
    <property type="term" value="P:translation"/>
    <property type="evidence" value="ECO:0007669"/>
    <property type="project" value="UniProtKB-UniRule"/>
</dbReference>
<dbReference type="Gene3D" id="4.10.640.10">
    <property type="entry name" value="Ribosomal protein S18"/>
    <property type="match status" value="1"/>
</dbReference>
<dbReference type="HAMAP" id="MF_00270">
    <property type="entry name" value="Ribosomal_bS18"/>
    <property type="match status" value="1"/>
</dbReference>
<dbReference type="InterPro" id="IPR001648">
    <property type="entry name" value="Ribosomal_bS18"/>
</dbReference>
<dbReference type="InterPro" id="IPR036870">
    <property type="entry name" value="Ribosomal_bS18_sf"/>
</dbReference>
<dbReference type="NCBIfam" id="TIGR00165">
    <property type="entry name" value="S18"/>
    <property type="match status" value="1"/>
</dbReference>
<dbReference type="PANTHER" id="PTHR13479">
    <property type="entry name" value="30S RIBOSOMAL PROTEIN S18"/>
    <property type="match status" value="1"/>
</dbReference>
<dbReference type="PANTHER" id="PTHR13479:SF40">
    <property type="entry name" value="SMALL RIBOSOMAL SUBUNIT PROTEIN BS18M"/>
    <property type="match status" value="1"/>
</dbReference>
<dbReference type="Pfam" id="PF01084">
    <property type="entry name" value="Ribosomal_S18"/>
    <property type="match status" value="1"/>
</dbReference>
<dbReference type="PRINTS" id="PR00974">
    <property type="entry name" value="RIBOSOMALS18"/>
</dbReference>
<dbReference type="SUPFAM" id="SSF46911">
    <property type="entry name" value="Ribosomal protein S18"/>
    <property type="match status" value="1"/>
</dbReference>
<name>RS18_MYCCT</name>
<feature type="chain" id="PRO_1000003537" description="Small ribosomal subunit protein bS18">
    <location>
        <begin position="1"/>
        <end position="75"/>
    </location>
</feature>
<accession>Q2ST89</accession>
<reference key="1">
    <citation type="submission" date="2005-09" db="EMBL/GenBank/DDBJ databases">
        <authorList>
            <person name="Glass J.I."/>
            <person name="Lartigue C."/>
            <person name="Pfannkoch C."/>
            <person name="Baden-Tillson H."/>
            <person name="Smith H.O."/>
            <person name="Venter J.C."/>
            <person name="Roske K."/>
            <person name="Wise K.S."/>
            <person name="Calcutt M.J."/>
            <person name="Nelson W.C."/>
            <person name="Nierman W.C."/>
        </authorList>
    </citation>
    <scope>NUCLEOTIDE SEQUENCE [LARGE SCALE GENOMIC DNA]</scope>
    <source>
        <strain>California kid / ATCC 27343 / NCTC 10154</strain>
    </source>
</reference>
<organism>
    <name type="scientific">Mycoplasma capricolum subsp. capricolum (strain California kid / ATCC 27343 / NCTC 10154)</name>
    <dbReference type="NCBI Taxonomy" id="340047"/>
    <lineage>
        <taxon>Bacteria</taxon>
        <taxon>Bacillati</taxon>
        <taxon>Mycoplasmatota</taxon>
        <taxon>Mollicutes</taxon>
        <taxon>Mycoplasmataceae</taxon>
        <taxon>Mycoplasma</taxon>
    </lineage>
</organism>
<keyword id="KW-0687">Ribonucleoprotein</keyword>
<keyword id="KW-0689">Ribosomal protein</keyword>
<keyword id="KW-0694">RNA-binding</keyword>
<keyword id="KW-0699">rRNA-binding</keyword>
<sequence length="75" mass="8917">MQVKKIKKRKKVNFFQKNNIKYIDYKDVELLKKFISPNGQILPRRITGTSLKDQRQLALAIKRARQMALLPYVIE</sequence>
<proteinExistence type="inferred from homology"/>
<gene>
    <name evidence="1" type="primary">rpsR</name>
    <name type="ordered locus">MCAP_0026</name>
</gene>
<protein>
    <recommendedName>
        <fullName evidence="1">Small ribosomal subunit protein bS18</fullName>
    </recommendedName>
    <alternativeName>
        <fullName evidence="2">30S ribosomal protein S18</fullName>
    </alternativeName>
</protein>